<keyword id="KW-0134">Cell wall</keyword>
<keyword id="KW-0349">Heme</keyword>
<keyword id="KW-0408">Iron</keyword>
<keyword id="KW-0479">Metal-binding</keyword>
<keyword id="KW-0572">Peptidoglycan-anchor</keyword>
<keyword id="KW-0964">Secreted</keyword>
<keyword id="KW-0732">Signal</keyword>
<accession>Q99UX3</accession>
<name>ISDC_STAAM</name>
<feature type="signal peptide" evidence="3">
    <location>
        <begin position="1"/>
        <end position="28"/>
    </location>
</feature>
<feature type="chain" id="PRO_0000019444" description="Iron-regulated surface determinant protein C">
    <location>
        <begin position="29"/>
        <end position="192"/>
    </location>
</feature>
<feature type="propeptide" id="PRO_0000019445" description="Removed by sortase B" evidence="2">
    <location>
        <begin position="193"/>
        <end position="227"/>
    </location>
</feature>
<feature type="domain" description="NEAT" evidence="4">
    <location>
        <begin position="29"/>
        <end position="150"/>
    </location>
</feature>
<feature type="region of interest" description="Disordered" evidence="5">
    <location>
        <begin position="149"/>
        <end position="191"/>
    </location>
</feature>
<feature type="short sequence motif" description="NPQTN sorting signal" evidence="2">
    <location>
        <begin position="189"/>
        <end position="193"/>
    </location>
</feature>
<feature type="compositionally biased region" description="Low complexity" evidence="5">
    <location>
        <begin position="161"/>
        <end position="175"/>
    </location>
</feature>
<feature type="binding site" evidence="2">
    <location>
        <position position="47"/>
    </location>
    <ligand>
        <name>heme</name>
        <dbReference type="ChEBI" id="CHEBI:30413"/>
    </ligand>
</feature>
<feature type="binding site" evidence="2">
    <location>
        <position position="48"/>
    </location>
    <ligand>
        <name>heme</name>
        <dbReference type="ChEBI" id="CHEBI:30413"/>
    </ligand>
</feature>
<feature type="binding site" description="axial binding residue" evidence="1">
    <location>
        <position position="132"/>
    </location>
    <ligand>
        <name>heme</name>
        <dbReference type="ChEBI" id="CHEBI:30413"/>
    </ligand>
    <ligandPart>
        <name>Fe</name>
        <dbReference type="ChEBI" id="CHEBI:18248"/>
    </ligandPart>
</feature>
<feature type="binding site" evidence="2">
    <location>
        <position position="136"/>
    </location>
    <ligand>
        <name>heme</name>
        <dbReference type="ChEBI" id="CHEBI:30413"/>
    </ligand>
</feature>
<feature type="modified residue" description="Pentaglycyl murein peptidoglycan amidated threonine" evidence="2">
    <location>
        <position position="192"/>
    </location>
</feature>
<protein>
    <recommendedName>
        <fullName>Iron-regulated surface determinant protein C</fullName>
    </recommendedName>
    <alternativeName>
        <fullName>Staphylococcal iron-regulated protein D</fullName>
    </alternativeName>
</protein>
<dbReference type="EMBL" id="BA000017">
    <property type="protein sequence ID" value="BAB57293.1"/>
    <property type="molecule type" value="Genomic_DNA"/>
</dbReference>
<dbReference type="RefSeq" id="WP_000789821.1">
    <property type="nucleotide sequence ID" value="NC_002758.2"/>
</dbReference>
<dbReference type="SMR" id="Q99UX3"/>
<dbReference type="KEGG" id="sav:SAV1131"/>
<dbReference type="HOGENOM" id="CLU_092243_1_0_9"/>
<dbReference type="PhylomeDB" id="Q99UX3"/>
<dbReference type="Proteomes" id="UP000002481">
    <property type="component" value="Chromosome"/>
</dbReference>
<dbReference type="GO" id="GO:0005576">
    <property type="term" value="C:extracellular region"/>
    <property type="evidence" value="ECO:0007669"/>
    <property type="project" value="UniProtKB-KW"/>
</dbReference>
<dbReference type="GO" id="GO:0009274">
    <property type="term" value="C:peptidoglycan-based cell wall"/>
    <property type="evidence" value="ECO:0007669"/>
    <property type="project" value="InterPro"/>
</dbReference>
<dbReference type="GO" id="GO:0030492">
    <property type="term" value="F:hemoglobin binding"/>
    <property type="evidence" value="ECO:0007669"/>
    <property type="project" value="InterPro"/>
</dbReference>
<dbReference type="GO" id="GO:0046872">
    <property type="term" value="F:metal ion binding"/>
    <property type="evidence" value="ECO:0007669"/>
    <property type="project" value="UniProtKB-KW"/>
</dbReference>
<dbReference type="GO" id="GO:0015886">
    <property type="term" value="P:heme transport"/>
    <property type="evidence" value="ECO:0007669"/>
    <property type="project" value="InterPro"/>
</dbReference>
<dbReference type="CDD" id="cd06920">
    <property type="entry name" value="NEAT"/>
    <property type="match status" value="1"/>
</dbReference>
<dbReference type="Gene3D" id="2.60.40.1850">
    <property type="match status" value="1"/>
</dbReference>
<dbReference type="InterPro" id="IPR019909">
    <property type="entry name" value="Haem_uptake_protein_IsdC"/>
</dbReference>
<dbReference type="InterPro" id="IPR050436">
    <property type="entry name" value="IsdA"/>
</dbReference>
<dbReference type="InterPro" id="IPR006635">
    <property type="entry name" value="NEAT_dom"/>
</dbReference>
<dbReference type="InterPro" id="IPR037250">
    <property type="entry name" value="NEAT_dom_sf"/>
</dbReference>
<dbReference type="InterPro" id="IPR017505">
    <property type="entry name" value="Sortase_SrtB_sig_NPQTN"/>
</dbReference>
<dbReference type="NCBIfam" id="TIGR03656">
    <property type="entry name" value="IsdC"/>
    <property type="match status" value="1"/>
</dbReference>
<dbReference type="NCBIfam" id="TIGR03068">
    <property type="entry name" value="srtB_sig_NPQTN"/>
    <property type="match status" value="1"/>
</dbReference>
<dbReference type="PANTHER" id="PTHR37824">
    <property type="entry name" value="IRON-REGULATED SURFACE DETERMINANT PROTEIN C"/>
    <property type="match status" value="1"/>
</dbReference>
<dbReference type="PANTHER" id="PTHR37824:SF1">
    <property type="entry name" value="IRON-REGULATED SURFACE DETERMINANT PROTEIN C"/>
    <property type="match status" value="1"/>
</dbReference>
<dbReference type="Pfam" id="PF05031">
    <property type="entry name" value="NEAT"/>
    <property type="match status" value="1"/>
</dbReference>
<dbReference type="SMART" id="SM00725">
    <property type="entry name" value="NEAT"/>
    <property type="match status" value="1"/>
</dbReference>
<dbReference type="SUPFAM" id="SSF158911">
    <property type="entry name" value="NEAT domain-like"/>
    <property type="match status" value="1"/>
</dbReference>
<dbReference type="PROSITE" id="PS50978">
    <property type="entry name" value="NEAT"/>
    <property type="match status" value="1"/>
</dbReference>
<evidence type="ECO:0000250" key="1"/>
<evidence type="ECO:0000250" key="2">
    <source>
        <dbReference type="UniProtKB" id="Q8KQR1"/>
    </source>
</evidence>
<evidence type="ECO:0000255" key="3"/>
<evidence type="ECO:0000255" key="4">
    <source>
        <dbReference type="PROSITE-ProRule" id="PRU00337"/>
    </source>
</evidence>
<evidence type="ECO:0000256" key="5">
    <source>
        <dbReference type="SAM" id="MobiDB-lite"/>
    </source>
</evidence>
<evidence type="ECO:0000305" key="6"/>
<comment type="function">
    <text evidence="1">Involved in heme (porphyrin) scavenging. Binds hemoglobin and almost exclusively free-base protoporphyrin IX. Probably has a role as the central conduit of the isd heme uptake system, i.e. mediates the transfer of the iron-containing nutrient from IsdABH to the membrane translocation system IsdDEF. Hemin-free IsdC (apo-IsdC) acquires hemin from hemin-containing IsdA (holo-IsdA) probably through the activated holo-IsdA-apo-IsdC complex and due to the higher affinity of apo-IsdC for the cofactor. The reaction is reversible (By similarity).</text>
</comment>
<comment type="subunit">
    <text evidence="1">Monomer. Interacts with IsdA (By similarity).</text>
</comment>
<comment type="subcellular location">
    <subcellularLocation>
        <location evidence="1">Secreted</location>
        <location evidence="1">Cell wall</location>
        <topology evidence="1">Peptidoglycan-anchor</topology>
    </subcellularLocation>
    <text evidence="2">Anchored to the cell wall by sortase B (By similarity).</text>
</comment>
<comment type="induction">
    <text evidence="1">Repressed by fur in the presence of iron.</text>
</comment>
<comment type="domain">
    <text evidence="1">The NEAT domain binds Fe(3+) heme iron. Reduction of the high-spin Fe(3+) heme iron to high-spin Fe(2+) results in loss of the heme from the binding site of the protein due to the absence of a proximal histidine (By similarity).</text>
</comment>
<comment type="similarity">
    <text evidence="6">Belongs to the IsdC family.</text>
</comment>
<organism>
    <name type="scientific">Staphylococcus aureus (strain Mu50 / ATCC 700699)</name>
    <dbReference type="NCBI Taxonomy" id="158878"/>
    <lineage>
        <taxon>Bacteria</taxon>
        <taxon>Bacillati</taxon>
        <taxon>Bacillota</taxon>
        <taxon>Bacilli</taxon>
        <taxon>Bacillales</taxon>
        <taxon>Staphylococcaceae</taxon>
        <taxon>Staphylococcus</taxon>
    </lineage>
</organism>
<proteinExistence type="inferred from homology"/>
<reference key="1">
    <citation type="journal article" date="2001" name="Lancet">
        <title>Whole genome sequencing of meticillin-resistant Staphylococcus aureus.</title>
        <authorList>
            <person name="Kuroda M."/>
            <person name="Ohta T."/>
            <person name="Uchiyama I."/>
            <person name="Baba T."/>
            <person name="Yuzawa H."/>
            <person name="Kobayashi I."/>
            <person name="Cui L."/>
            <person name="Oguchi A."/>
            <person name="Aoki K."/>
            <person name="Nagai Y."/>
            <person name="Lian J.-Q."/>
            <person name="Ito T."/>
            <person name="Kanamori M."/>
            <person name="Matsumaru H."/>
            <person name="Maruyama A."/>
            <person name="Murakami H."/>
            <person name="Hosoyama A."/>
            <person name="Mizutani-Ui Y."/>
            <person name="Takahashi N.K."/>
            <person name="Sawano T."/>
            <person name="Inoue R."/>
            <person name="Kaito C."/>
            <person name="Sekimizu K."/>
            <person name="Hirakawa H."/>
            <person name="Kuhara S."/>
            <person name="Goto S."/>
            <person name="Yabuzaki J."/>
            <person name="Kanehisa M."/>
            <person name="Yamashita A."/>
            <person name="Oshima K."/>
            <person name="Furuya K."/>
            <person name="Yoshino C."/>
            <person name="Shiba T."/>
            <person name="Hattori M."/>
            <person name="Ogasawara N."/>
            <person name="Hayashi H."/>
            <person name="Hiramatsu K."/>
        </authorList>
    </citation>
    <scope>NUCLEOTIDE SEQUENCE [LARGE SCALE GENOMIC DNA]</scope>
    <source>
        <strain>Mu50 / ATCC 700699</strain>
    </source>
</reference>
<sequence length="227" mass="24855">MKNILKVFNTTILALIIIIATFSNSANAADSGTLNYEVYKYNTNDTSIANDYFNKPAKYIKKNGKLYVQITVNHSHWITGMSIEGHKENIISKNTAKDERTSEFEVSKLNGKIDGKIDVYIDEKVNGKPFKYDHHYNITYKFNGPTDVAGANAPGKDDKNSASGSDKGSDGTTTGQSESNSSNKDKVENPQTNAGTPAYIYAIPVASLALLIAITLFVRKKSKGNVE</sequence>
<gene>
    <name type="primary">isdC</name>
    <name type="synonym">sirD</name>
    <name type="ordered locus">SAV1131</name>
</gene>